<gene>
    <name type="primary">gsp</name>
</gene>
<reference key="1">
    <citation type="journal article" date="1994" name="J. Bacteriol.">
        <title>Induction of surfactin production in Bacillus subtilis by gsp, a gene located upstream of the gramicidin S operon in Bacillus brevis.</title>
        <authorList>
            <person name="Borchert S."/>
            <person name="Stachelhaus T."/>
            <person name="Marahiel M.A."/>
        </authorList>
    </citation>
    <scope>NUCLEOTIDE SEQUENCE [GENOMIC DNA]</scope>
    <source>
        <strain>ATCC 9999 / DSM 2895 / JCM 8504 / NBRC 15520 / NCIMB 7096 / NCTC 7096</strain>
    </source>
</reference>
<reference key="2">
    <citation type="journal article" date="1989" name="J. Bacteriol.">
        <title>Gramicidin S biosynthesis operon containing the structural genes grsA and grsB has an open reading frame encoding a protein homologous to fatty acid thioesterases.</title>
        <authorList>
            <person name="Kraetzschmar J."/>
            <person name="Krause M."/>
            <person name="Marahiel M.A."/>
        </authorList>
    </citation>
    <scope>NUCLEOTIDE SEQUENCE [GENOMIC DNA] OF 13-237</scope>
    <source>
        <strain>ATCC 9999 / DSM 2895 / JCM 8504 / NBRC 15520 / NCIMB 7096 / NCTC 7096</strain>
    </source>
</reference>
<reference key="3">
    <citation type="journal article" date="1996" name="Chem. Biol.">
        <title>A new enzyme superfamily -- the phosphopantetheinyl transferases.</title>
        <authorList>
            <person name="Lambalot R.H."/>
            <person name="Gehring A.M."/>
            <person name="Flugel R.S."/>
            <person name="Zuber P."/>
            <person name="LaCelle M."/>
            <person name="Marahiel M.A."/>
            <person name="Reid R."/>
            <person name="Khosla C."/>
            <person name="Walsh C.T."/>
        </authorList>
    </citation>
    <scope>FUNCTION</scope>
</reference>
<organism>
    <name type="scientific">Aneurinibacillus migulanus</name>
    <name type="common">Bacillus migulanus</name>
    <dbReference type="NCBI Taxonomy" id="47500"/>
    <lineage>
        <taxon>Bacteria</taxon>
        <taxon>Bacillati</taxon>
        <taxon>Bacillota</taxon>
        <taxon>Bacilli</taxon>
        <taxon>Bacillales</taxon>
        <taxon>Paenibacillaceae</taxon>
        <taxon>Aneurinibacillus group</taxon>
        <taxon>Aneurinibacillus</taxon>
    </lineage>
</organism>
<accession>P40683</accession>
<name>GSP_ANEMI</name>
<proteinExistence type="inferred from homology"/>
<protein>
    <recommendedName>
        <fullName>4'-phosphopantetheinyl transferase gsp</fullName>
        <ecNumber>2.7.8.-</ecNumber>
    </recommendedName>
    <alternativeName>
        <fullName>Gramicidin synthase-activating enzyme</fullName>
    </alternativeName>
</protein>
<evidence type="ECO:0000250" key="1"/>
<evidence type="ECO:0000269" key="2">
    <source>
    </source>
</evidence>
<evidence type="ECO:0000305" key="3"/>
<dbReference type="EC" id="2.7.8.-"/>
<dbReference type="EMBL" id="M29703">
    <property type="protein sequence ID" value="AAA58716.1"/>
    <property type="molecule type" value="Genomic_DNA"/>
</dbReference>
<dbReference type="EMBL" id="X76434">
    <property type="protein sequence ID" value="CAA53988.1"/>
    <property type="molecule type" value="Genomic_DNA"/>
</dbReference>
<dbReference type="EMBL" id="X15577">
    <property type="protein sequence ID" value="CAA33601.1"/>
    <property type="molecule type" value="Genomic_DNA"/>
</dbReference>
<dbReference type="PIR" id="A55218">
    <property type="entry name" value="A55218"/>
</dbReference>
<dbReference type="RefSeq" id="WP_052811850.1">
    <property type="nucleotide sequence ID" value="NZ_BJOA01000132.1"/>
</dbReference>
<dbReference type="SMR" id="P40683"/>
<dbReference type="GeneID" id="42306991"/>
<dbReference type="OrthoDB" id="9808281at2"/>
<dbReference type="GO" id="GO:0005829">
    <property type="term" value="C:cytosol"/>
    <property type="evidence" value="ECO:0007669"/>
    <property type="project" value="TreeGrafter"/>
</dbReference>
<dbReference type="GO" id="GO:0008897">
    <property type="term" value="F:holo-[acyl-carrier-protein] synthase activity"/>
    <property type="evidence" value="ECO:0007669"/>
    <property type="project" value="InterPro"/>
</dbReference>
<dbReference type="GO" id="GO:0000287">
    <property type="term" value="F:magnesium ion binding"/>
    <property type="evidence" value="ECO:0007669"/>
    <property type="project" value="InterPro"/>
</dbReference>
<dbReference type="GO" id="GO:0017000">
    <property type="term" value="P:antibiotic biosynthetic process"/>
    <property type="evidence" value="ECO:0007669"/>
    <property type="project" value="UniProtKB-KW"/>
</dbReference>
<dbReference type="GO" id="GO:0006633">
    <property type="term" value="P:fatty acid biosynthetic process"/>
    <property type="evidence" value="ECO:0007669"/>
    <property type="project" value="InterPro"/>
</dbReference>
<dbReference type="GO" id="GO:0019878">
    <property type="term" value="P:lysine biosynthetic process via aminoadipic acid"/>
    <property type="evidence" value="ECO:0007669"/>
    <property type="project" value="TreeGrafter"/>
</dbReference>
<dbReference type="Gene3D" id="3.90.470.20">
    <property type="entry name" value="4'-phosphopantetheinyl transferase domain"/>
    <property type="match status" value="2"/>
</dbReference>
<dbReference type="InterPro" id="IPR008278">
    <property type="entry name" value="4-PPantetheinyl_Trfase_dom"/>
</dbReference>
<dbReference type="InterPro" id="IPR037143">
    <property type="entry name" value="4-PPantetheinyl_Trfase_dom_sf"/>
</dbReference>
<dbReference type="InterPro" id="IPR055066">
    <property type="entry name" value="AASDHPPT_N"/>
</dbReference>
<dbReference type="InterPro" id="IPR050559">
    <property type="entry name" value="P-Pant_transferase_sf"/>
</dbReference>
<dbReference type="InterPro" id="IPR004568">
    <property type="entry name" value="Ppantetheine-prot_Trfase_dom"/>
</dbReference>
<dbReference type="NCBIfam" id="TIGR00556">
    <property type="entry name" value="pantethn_trn"/>
    <property type="match status" value="1"/>
</dbReference>
<dbReference type="PANTHER" id="PTHR12215:SF10">
    <property type="entry name" value="L-AMINOADIPATE-SEMIALDEHYDE DEHYDROGENASE-PHOSPHOPANTETHEINYL TRANSFERASE"/>
    <property type="match status" value="1"/>
</dbReference>
<dbReference type="PANTHER" id="PTHR12215">
    <property type="entry name" value="PHOSPHOPANTETHEINE TRANSFERASE"/>
    <property type="match status" value="1"/>
</dbReference>
<dbReference type="Pfam" id="PF22624">
    <property type="entry name" value="AASDHPPT_N"/>
    <property type="match status" value="1"/>
</dbReference>
<dbReference type="Pfam" id="PF01648">
    <property type="entry name" value="ACPS"/>
    <property type="match status" value="1"/>
</dbReference>
<dbReference type="SUPFAM" id="SSF56214">
    <property type="entry name" value="4'-phosphopantetheinyl transferase"/>
    <property type="match status" value="2"/>
</dbReference>
<sequence length="237" mass="27857">MIEMLFVKVPNEIDRHVFNFLSSNVSKEKQQAFVRYVNVKDAYRSLLGELLIRKYLIQVLNIPNENILFRKNEYGKPFVDFDIHFNISHSDEWVVCAISNHPVGIDIERISEIDIKIAEQFFHENEYIWLQSKAQNSQVSSFFELWTIKESYIKAIGKGMYIPINSFWIDKNQTQTVIYKQNKKEPVTIYEPELFEGYKCSCCSLFSSVTNLSITKLQVQELCNLFLDSTFSENNNF</sequence>
<comment type="function">
    <text evidence="2">Activates the five peptidyl carrier protein (PCP) domains of gramicidin synthase GrsAB, by transferring the 4'-phosphopantetheinyl moiety of coenzyme A (CoA) to a serine residue. Required for gramicidin S production.</text>
</comment>
<comment type="catalytic activity">
    <reaction>
        <text>apo-[peptidyl-carrier protein] + CoA = holo-[peptidyl-carrier protein] + adenosine 3',5'-bisphosphate + H(+)</text>
        <dbReference type="Rhea" id="RHEA:46228"/>
        <dbReference type="Rhea" id="RHEA-COMP:11479"/>
        <dbReference type="Rhea" id="RHEA-COMP:11480"/>
        <dbReference type="ChEBI" id="CHEBI:15378"/>
        <dbReference type="ChEBI" id="CHEBI:29999"/>
        <dbReference type="ChEBI" id="CHEBI:57287"/>
        <dbReference type="ChEBI" id="CHEBI:58343"/>
        <dbReference type="ChEBI" id="CHEBI:64479"/>
    </reaction>
</comment>
<comment type="cofactor">
    <cofactor evidence="1">
        <name>Mg(2+)</name>
        <dbReference type="ChEBI" id="CHEBI:18420"/>
    </cofactor>
</comment>
<comment type="similarity">
    <text evidence="3">Belongs to the P-Pant transferase superfamily. Gsp/Sfp/HetI/AcpT family.</text>
</comment>
<feature type="chain" id="PRO_0000206076" description="4'-phosphopantetheinyl transferase gsp">
    <location>
        <begin position="1"/>
        <end position="237"/>
    </location>
</feature>
<feature type="binding site" evidence="1">
    <location>
        <position position="106"/>
    </location>
    <ligand>
        <name>Mg(2+)</name>
        <dbReference type="ChEBI" id="CHEBI:18420"/>
    </ligand>
</feature>
<feature type="binding site" evidence="1">
    <location>
        <position position="108"/>
    </location>
    <ligand>
        <name>Mg(2+)</name>
        <dbReference type="ChEBI" id="CHEBI:18420"/>
    </ligand>
</feature>
<feature type="binding site" evidence="1">
    <location>
        <position position="150"/>
    </location>
    <ligand>
        <name>Mg(2+)</name>
        <dbReference type="ChEBI" id="CHEBI:18420"/>
    </ligand>
</feature>
<keyword id="KW-0045">Antibiotic biosynthesis</keyword>
<keyword id="KW-0460">Magnesium</keyword>
<keyword id="KW-0479">Metal-binding</keyword>
<keyword id="KW-0808">Transferase</keyword>